<gene>
    <name evidence="1" type="primary">bioF</name>
    <name type="ordered locus">EcHS_A0830</name>
</gene>
<protein>
    <recommendedName>
        <fullName evidence="1">8-amino-7-oxononanoate synthase</fullName>
        <shortName evidence="1">AONS</shortName>
        <ecNumber evidence="1">2.3.1.47</ecNumber>
    </recommendedName>
    <alternativeName>
        <fullName evidence="1">7-keto-8-amino-pelargonic acid synthase</fullName>
        <shortName evidence="1">7-KAP synthase</shortName>
        <shortName evidence="1">KAPA synthase</shortName>
    </alternativeName>
    <alternativeName>
        <fullName evidence="1">8-amino-7-ketopelargonate synthase</fullName>
    </alternativeName>
</protein>
<keyword id="KW-0093">Biotin biosynthesis</keyword>
<keyword id="KW-0663">Pyridoxal phosphate</keyword>
<keyword id="KW-0808">Transferase</keyword>
<evidence type="ECO:0000255" key="1">
    <source>
        <dbReference type="HAMAP-Rule" id="MF_01693"/>
    </source>
</evidence>
<name>BIOF_ECOHS</name>
<proteinExistence type="inferred from homology"/>
<feature type="chain" id="PRO_0000380977" description="8-amino-7-oxononanoate synthase">
    <location>
        <begin position="1"/>
        <end position="384"/>
    </location>
</feature>
<feature type="binding site" evidence="1">
    <location>
        <position position="21"/>
    </location>
    <ligand>
        <name>substrate</name>
    </ligand>
</feature>
<feature type="binding site" evidence="1">
    <location>
        <begin position="108"/>
        <end position="109"/>
    </location>
    <ligand>
        <name>pyridoxal 5'-phosphate</name>
        <dbReference type="ChEBI" id="CHEBI:597326"/>
    </ligand>
</feature>
<feature type="binding site" evidence="1">
    <location>
        <position position="133"/>
    </location>
    <ligand>
        <name>substrate</name>
    </ligand>
</feature>
<feature type="binding site" evidence="1">
    <location>
        <position position="179"/>
    </location>
    <ligand>
        <name>pyridoxal 5'-phosphate</name>
        <dbReference type="ChEBI" id="CHEBI:597326"/>
    </ligand>
</feature>
<feature type="binding site" evidence="1">
    <location>
        <position position="207"/>
    </location>
    <ligand>
        <name>pyridoxal 5'-phosphate</name>
        <dbReference type="ChEBI" id="CHEBI:597326"/>
    </ligand>
</feature>
<feature type="binding site" evidence="1">
    <location>
        <position position="233"/>
    </location>
    <ligand>
        <name>pyridoxal 5'-phosphate</name>
        <dbReference type="ChEBI" id="CHEBI:597326"/>
    </ligand>
</feature>
<feature type="binding site" evidence="1">
    <location>
        <position position="352"/>
    </location>
    <ligand>
        <name>substrate</name>
    </ligand>
</feature>
<feature type="modified residue" description="N6-(pyridoxal phosphate)lysine" evidence="1">
    <location>
        <position position="236"/>
    </location>
</feature>
<reference key="1">
    <citation type="journal article" date="2008" name="J. Bacteriol.">
        <title>The pangenome structure of Escherichia coli: comparative genomic analysis of E. coli commensal and pathogenic isolates.</title>
        <authorList>
            <person name="Rasko D.A."/>
            <person name="Rosovitz M.J."/>
            <person name="Myers G.S.A."/>
            <person name="Mongodin E.F."/>
            <person name="Fricke W.F."/>
            <person name="Gajer P."/>
            <person name="Crabtree J."/>
            <person name="Sebaihia M."/>
            <person name="Thomson N.R."/>
            <person name="Chaudhuri R."/>
            <person name="Henderson I.R."/>
            <person name="Sperandio V."/>
            <person name="Ravel J."/>
        </authorList>
    </citation>
    <scope>NUCLEOTIDE SEQUENCE [LARGE SCALE GENOMIC DNA]</scope>
    <source>
        <strain>HS</strain>
    </source>
</reference>
<accession>A7ZY32</accession>
<organism>
    <name type="scientific">Escherichia coli O9:H4 (strain HS)</name>
    <dbReference type="NCBI Taxonomy" id="331112"/>
    <lineage>
        <taxon>Bacteria</taxon>
        <taxon>Pseudomonadati</taxon>
        <taxon>Pseudomonadota</taxon>
        <taxon>Gammaproteobacteria</taxon>
        <taxon>Enterobacterales</taxon>
        <taxon>Enterobacteriaceae</taxon>
        <taxon>Escherichia</taxon>
    </lineage>
</organism>
<sequence>MSWQDKINAALDARRAADALRRRYPVAQGAGRWLVADDRQYLNFSSNDYLGLSHHPQIIRAWKQSAEQFGVGSGGSGHVSGYSVAHQALEEELAEWLGYSRALLFISGFAANQAVIAAMMAKEDRIVADRLSHASLLEAASLSPSQLRRFVHNDVTHLARLLASPCPGQQMVVTEGVFSMDGDSAPLAEIQQVTQQHNGWLMVDDAHGTGVIGEQGRGSCWLQKVKPELLVVTFGKGFGVSGAAVLCSSTVADYLLQFARHLIYSTSMPPAQAQALRASLAVIRSDEGDARREKLAALITRFRAGVQDLPFTLADSCSAIQPLIVGDNSRALQLAEKLRQQGCWVTAIRPPTVPAGTARLRLTLTAAHEMQDIDRLLEVLHGNG</sequence>
<dbReference type="EC" id="2.3.1.47" evidence="1"/>
<dbReference type="EMBL" id="CP000802">
    <property type="protein sequence ID" value="ABV05186.1"/>
    <property type="molecule type" value="Genomic_DNA"/>
</dbReference>
<dbReference type="RefSeq" id="WP_000118797.1">
    <property type="nucleotide sequence ID" value="NC_009800.1"/>
</dbReference>
<dbReference type="SMR" id="A7ZY32"/>
<dbReference type="KEGG" id="ecx:EcHS_A0830"/>
<dbReference type="HOGENOM" id="CLU_015846_11_2_6"/>
<dbReference type="UniPathway" id="UPA00078"/>
<dbReference type="GO" id="GO:0008710">
    <property type="term" value="F:8-amino-7-oxononanoate synthase activity"/>
    <property type="evidence" value="ECO:0007669"/>
    <property type="project" value="UniProtKB-UniRule"/>
</dbReference>
<dbReference type="GO" id="GO:0030170">
    <property type="term" value="F:pyridoxal phosphate binding"/>
    <property type="evidence" value="ECO:0007669"/>
    <property type="project" value="UniProtKB-UniRule"/>
</dbReference>
<dbReference type="GO" id="GO:0009102">
    <property type="term" value="P:biotin biosynthetic process"/>
    <property type="evidence" value="ECO:0007669"/>
    <property type="project" value="UniProtKB-UniRule"/>
</dbReference>
<dbReference type="CDD" id="cd06454">
    <property type="entry name" value="KBL_like"/>
    <property type="match status" value="1"/>
</dbReference>
<dbReference type="FunFam" id="3.40.640.10:FF:000095">
    <property type="entry name" value="8-amino-7-oxononanoate synthase"/>
    <property type="match status" value="1"/>
</dbReference>
<dbReference type="FunFam" id="3.90.1150.10:FF:000036">
    <property type="entry name" value="8-amino-7-oxononanoate synthase"/>
    <property type="match status" value="1"/>
</dbReference>
<dbReference type="Gene3D" id="3.90.1150.10">
    <property type="entry name" value="Aspartate Aminotransferase, domain 1"/>
    <property type="match status" value="1"/>
</dbReference>
<dbReference type="Gene3D" id="3.40.640.10">
    <property type="entry name" value="Type I PLP-dependent aspartate aminotransferase-like (Major domain)"/>
    <property type="match status" value="1"/>
</dbReference>
<dbReference type="HAMAP" id="MF_01693">
    <property type="entry name" value="BioF_aminotrans_2"/>
    <property type="match status" value="1"/>
</dbReference>
<dbReference type="InterPro" id="IPR001917">
    <property type="entry name" value="Aminotrans_II_pyridoxalP_BS"/>
</dbReference>
<dbReference type="InterPro" id="IPR004839">
    <property type="entry name" value="Aminotransferase_I/II_large"/>
</dbReference>
<dbReference type="InterPro" id="IPR050087">
    <property type="entry name" value="AON_synthase_class-II"/>
</dbReference>
<dbReference type="InterPro" id="IPR004723">
    <property type="entry name" value="AONS_Archaea/Proteobacteria"/>
</dbReference>
<dbReference type="InterPro" id="IPR022834">
    <property type="entry name" value="AONS_Proteobacteria"/>
</dbReference>
<dbReference type="InterPro" id="IPR015424">
    <property type="entry name" value="PyrdxlP-dep_Trfase"/>
</dbReference>
<dbReference type="InterPro" id="IPR015421">
    <property type="entry name" value="PyrdxlP-dep_Trfase_major"/>
</dbReference>
<dbReference type="InterPro" id="IPR015422">
    <property type="entry name" value="PyrdxlP-dep_Trfase_small"/>
</dbReference>
<dbReference type="NCBIfam" id="TIGR00858">
    <property type="entry name" value="bioF"/>
    <property type="match status" value="1"/>
</dbReference>
<dbReference type="PANTHER" id="PTHR13693:SF100">
    <property type="entry name" value="8-AMINO-7-OXONONANOATE SYNTHASE"/>
    <property type="match status" value="1"/>
</dbReference>
<dbReference type="PANTHER" id="PTHR13693">
    <property type="entry name" value="CLASS II AMINOTRANSFERASE/8-AMINO-7-OXONONANOATE SYNTHASE"/>
    <property type="match status" value="1"/>
</dbReference>
<dbReference type="Pfam" id="PF00155">
    <property type="entry name" value="Aminotran_1_2"/>
    <property type="match status" value="1"/>
</dbReference>
<dbReference type="SUPFAM" id="SSF53383">
    <property type="entry name" value="PLP-dependent transferases"/>
    <property type="match status" value="1"/>
</dbReference>
<dbReference type="PROSITE" id="PS00599">
    <property type="entry name" value="AA_TRANSFER_CLASS_2"/>
    <property type="match status" value="1"/>
</dbReference>
<comment type="function">
    <text evidence="1">Catalyzes the decarboxylative condensation of pimeloyl-[acyl-carrier protein] and L-alanine to produce 8-amino-7-oxononanoate (AON), [acyl-carrier protein], and carbon dioxide.</text>
</comment>
<comment type="catalytic activity">
    <reaction evidence="1">
        <text>6-carboxyhexanoyl-[ACP] + L-alanine + H(+) = (8S)-8-amino-7-oxononanoate + holo-[ACP] + CO2</text>
        <dbReference type="Rhea" id="RHEA:42288"/>
        <dbReference type="Rhea" id="RHEA-COMP:9685"/>
        <dbReference type="Rhea" id="RHEA-COMP:9955"/>
        <dbReference type="ChEBI" id="CHEBI:15378"/>
        <dbReference type="ChEBI" id="CHEBI:16526"/>
        <dbReference type="ChEBI" id="CHEBI:57972"/>
        <dbReference type="ChEBI" id="CHEBI:64479"/>
        <dbReference type="ChEBI" id="CHEBI:78846"/>
        <dbReference type="ChEBI" id="CHEBI:149468"/>
        <dbReference type="EC" id="2.3.1.47"/>
    </reaction>
</comment>
<comment type="cofactor">
    <cofactor evidence="1">
        <name>pyridoxal 5'-phosphate</name>
        <dbReference type="ChEBI" id="CHEBI:597326"/>
    </cofactor>
</comment>
<comment type="pathway">
    <text evidence="1">Cofactor biosynthesis; biotin biosynthesis.</text>
</comment>
<comment type="subunit">
    <text evidence="1">Homodimer.</text>
</comment>
<comment type="similarity">
    <text evidence="1">Belongs to the class-II pyridoxal-phosphate-dependent aminotransferase family. BioF subfamily.</text>
</comment>